<organism>
    <name type="scientific">Alluaudia procera</name>
    <name type="common">Madagascan ocotillo</name>
    <name type="synonym">Didierea procera</name>
    <dbReference type="NCBI Taxonomy" id="3586"/>
    <lineage>
        <taxon>Eukaryota</taxon>
        <taxon>Viridiplantae</taxon>
        <taxon>Streptophyta</taxon>
        <taxon>Embryophyta</taxon>
        <taxon>Tracheophyta</taxon>
        <taxon>Spermatophyta</taxon>
        <taxon>Magnoliopsida</taxon>
        <taxon>eudicotyledons</taxon>
        <taxon>Gunneridae</taxon>
        <taxon>Pentapetalae</taxon>
        <taxon>Caryophyllales</taxon>
        <taxon>Cactineae</taxon>
        <taxon>Didiereaceae</taxon>
        <taxon>Alluaudia</taxon>
    </lineage>
</organism>
<proteinExistence type="inferred from homology"/>
<feature type="propeptide" id="PRO_0000031105" evidence="1">
    <location>
        <begin position="1"/>
        <end position="2"/>
    </location>
</feature>
<feature type="chain" id="PRO_0000031106" description="Ribulose bisphosphate carboxylase large chain">
    <location>
        <begin position="3"/>
        <end position="480"/>
    </location>
</feature>
<feature type="active site" description="Proton acceptor" evidence="1">
    <location>
        <position position="175"/>
    </location>
</feature>
<feature type="active site" description="Proton acceptor" evidence="1">
    <location>
        <position position="294"/>
    </location>
</feature>
<feature type="binding site" description="in homodimeric partner" evidence="1">
    <location>
        <position position="123"/>
    </location>
    <ligand>
        <name>substrate</name>
    </ligand>
</feature>
<feature type="binding site" evidence="1">
    <location>
        <position position="173"/>
    </location>
    <ligand>
        <name>substrate</name>
    </ligand>
</feature>
<feature type="binding site" evidence="1">
    <location>
        <position position="177"/>
    </location>
    <ligand>
        <name>substrate</name>
    </ligand>
</feature>
<feature type="binding site" description="via carbamate group" evidence="1">
    <location>
        <position position="201"/>
    </location>
    <ligand>
        <name>Mg(2+)</name>
        <dbReference type="ChEBI" id="CHEBI:18420"/>
    </ligand>
</feature>
<feature type="binding site" evidence="1">
    <location>
        <position position="203"/>
    </location>
    <ligand>
        <name>Mg(2+)</name>
        <dbReference type="ChEBI" id="CHEBI:18420"/>
    </ligand>
</feature>
<feature type="binding site" evidence="1">
    <location>
        <position position="204"/>
    </location>
    <ligand>
        <name>Mg(2+)</name>
        <dbReference type="ChEBI" id="CHEBI:18420"/>
    </ligand>
</feature>
<feature type="binding site" evidence="1">
    <location>
        <position position="295"/>
    </location>
    <ligand>
        <name>substrate</name>
    </ligand>
</feature>
<feature type="binding site" evidence="1">
    <location>
        <position position="327"/>
    </location>
    <ligand>
        <name>substrate</name>
    </ligand>
</feature>
<feature type="binding site" evidence="1">
    <location>
        <position position="379"/>
    </location>
    <ligand>
        <name>substrate</name>
    </ligand>
</feature>
<feature type="site" description="Transition state stabilizer" evidence="1">
    <location>
        <position position="334"/>
    </location>
</feature>
<feature type="modified residue" description="N-acetylproline" evidence="1">
    <location>
        <position position="3"/>
    </location>
</feature>
<feature type="modified residue" description="N6,N6,N6-trimethyllysine" evidence="1">
    <location>
        <position position="14"/>
    </location>
</feature>
<feature type="modified residue" description="N6-carboxylysine" evidence="1">
    <location>
        <position position="201"/>
    </location>
</feature>
<feature type="disulfide bond" description="Interchain; in linked form" evidence="1">
    <location>
        <position position="247"/>
    </location>
</feature>
<geneLocation type="chloroplast"/>
<name>RBL_ALLPR</name>
<protein>
    <recommendedName>
        <fullName evidence="1">Ribulose bisphosphate carboxylase large chain</fullName>
        <shortName evidence="1">RuBisCO large subunit</shortName>
        <ecNumber evidence="1">4.1.1.39</ecNumber>
    </recommendedName>
</protein>
<gene>
    <name evidence="1" type="primary">rbcL</name>
</gene>
<sequence>MSPQTETKASVGFKAGVKDYKLTYYTPEYQPLDTDILAAFRVTPQPGVPSEEAGAAVAAESSTGTWTTVWTDGLTSLDRYKGRCYHIDAVPGEDNQYICYVAYPLDLFEEGSVTNMFTSIVGNVFGFKALRALRLEDLRIPVAYIKTFQGPPHGIQVERDKLNKYGRPLLGCTIKPKLGLSAKNYGRAVYECLRGGLDFTKDDENVNSQPFMRWRDRFLFCAEAIYKAQAETGEIKGHYLNATAGTCEEMIKRAVFARELGVPIVMHDYLTGGFTANTSLAHYCRDNGLLLHIHRAMHAVIDRQKNHGMHFRVLAKALRLSGGDHIHAGTVVGKLEGERDITLGFVDLLRDDYTEIDPERGIYFTQFWVSTPGVLPVASGGIHVWHMPALTEIFGDDSVLQFGGGTLGHPWGNAPGAVANRVALEACVQARNEGRDLAREGATIIREASKWSPELAAACEVWKEIKFEFPAVDTLDKKKG</sequence>
<keyword id="KW-0007">Acetylation</keyword>
<keyword id="KW-0113">Calvin cycle</keyword>
<keyword id="KW-0120">Carbon dioxide fixation</keyword>
<keyword id="KW-0150">Chloroplast</keyword>
<keyword id="KW-1015">Disulfide bond</keyword>
<keyword id="KW-0456">Lyase</keyword>
<keyword id="KW-0460">Magnesium</keyword>
<keyword id="KW-0479">Metal-binding</keyword>
<keyword id="KW-0488">Methylation</keyword>
<keyword id="KW-0503">Monooxygenase</keyword>
<keyword id="KW-0560">Oxidoreductase</keyword>
<keyword id="KW-0601">Photorespiration</keyword>
<keyword id="KW-0602">Photosynthesis</keyword>
<keyword id="KW-0934">Plastid</keyword>
<reference key="1">
    <citation type="submission" date="1991-12" db="EMBL/GenBank/DDBJ databases">
        <title>Systematics of Caryophyllales using large subunit of ribulose-1, 5-bisphosphate carboxylase/oxygenase (rbcL) gene sequence data.</title>
        <authorList>
            <person name="Rettig J.H."/>
            <person name="Wilson H.D."/>
            <person name="Manhart J.R."/>
        </authorList>
    </citation>
    <scope>NUCLEOTIDE SEQUENCE [GENOMIC DNA]</scope>
</reference>
<dbReference type="EC" id="4.1.1.39" evidence="1"/>
<dbReference type="EMBL" id="M62563">
    <property type="protein sequence ID" value="AAA84014.1"/>
    <property type="molecule type" value="Genomic_DNA"/>
</dbReference>
<dbReference type="SMR" id="P25826"/>
<dbReference type="GO" id="GO:0009507">
    <property type="term" value="C:chloroplast"/>
    <property type="evidence" value="ECO:0007669"/>
    <property type="project" value="UniProtKB-SubCell"/>
</dbReference>
<dbReference type="GO" id="GO:0000287">
    <property type="term" value="F:magnesium ion binding"/>
    <property type="evidence" value="ECO:0007669"/>
    <property type="project" value="UniProtKB-UniRule"/>
</dbReference>
<dbReference type="GO" id="GO:0004497">
    <property type="term" value="F:monooxygenase activity"/>
    <property type="evidence" value="ECO:0007669"/>
    <property type="project" value="UniProtKB-KW"/>
</dbReference>
<dbReference type="GO" id="GO:0016984">
    <property type="term" value="F:ribulose-bisphosphate carboxylase activity"/>
    <property type="evidence" value="ECO:0007669"/>
    <property type="project" value="UniProtKB-UniRule"/>
</dbReference>
<dbReference type="GO" id="GO:0009853">
    <property type="term" value="P:photorespiration"/>
    <property type="evidence" value="ECO:0007669"/>
    <property type="project" value="UniProtKB-KW"/>
</dbReference>
<dbReference type="GO" id="GO:0019253">
    <property type="term" value="P:reductive pentose-phosphate cycle"/>
    <property type="evidence" value="ECO:0007669"/>
    <property type="project" value="UniProtKB-UniRule"/>
</dbReference>
<dbReference type="CDD" id="cd08212">
    <property type="entry name" value="RuBisCO_large_I"/>
    <property type="match status" value="1"/>
</dbReference>
<dbReference type="FunFam" id="3.20.20.110:FF:000001">
    <property type="entry name" value="Ribulose bisphosphate carboxylase large chain"/>
    <property type="match status" value="1"/>
</dbReference>
<dbReference type="FunFam" id="3.30.70.150:FF:000001">
    <property type="entry name" value="Ribulose bisphosphate carboxylase large chain"/>
    <property type="match status" value="1"/>
</dbReference>
<dbReference type="Gene3D" id="3.20.20.110">
    <property type="entry name" value="Ribulose bisphosphate carboxylase, large subunit, C-terminal domain"/>
    <property type="match status" value="1"/>
</dbReference>
<dbReference type="Gene3D" id="3.30.70.150">
    <property type="entry name" value="RuBisCO large subunit, N-terminal domain"/>
    <property type="match status" value="1"/>
</dbReference>
<dbReference type="HAMAP" id="MF_01338">
    <property type="entry name" value="RuBisCO_L_type1"/>
    <property type="match status" value="1"/>
</dbReference>
<dbReference type="InterPro" id="IPR033966">
    <property type="entry name" value="RuBisCO"/>
</dbReference>
<dbReference type="InterPro" id="IPR020878">
    <property type="entry name" value="RuBisCo_large_chain_AS"/>
</dbReference>
<dbReference type="InterPro" id="IPR000685">
    <property type="entry name" value="RuBisCO_lsu_C"/>
</dbReference>
<dbReference type="InterPro" id="IPR036376">
    <property type="entry name" value="RuBisCO_lsu_C_sf"/>
</dbReference>
<dbReference type="InterPro" id="IPR017443">
    <property type="entry name" value="RuBisCO_lsu_fd_N"/>
</dbReference>
<dbReference type="InterPro" id="IPR036422">
    <property type="entry name" value="RuBisCO_lsu_N_sf"/>
</dbReference>
<dbReference type="InterPro" id="IPR020888">
    <property type="entry name" value="RuBisCO_lsuI"/>
</dbReference>
<dbReference type="NCBIfam" id="NF003252">
    <property type="entry name" value="PRK04208.1"/>
    <property type="match status" value="1"/>
</dbReference>
<dbReference type="PANTHER" id="PTHR42704">
    <property type="entry name" value="RIBULOSE BISPHOSPHATE CARBOXYLASE"/>
    <property type="match status" value="1"/>
</dbReference>
<dbReference type="PANTHER" id="PTHR42704:SF15">
    <property type="entry name" value="RIBULOSE BISPHOSPHATE CARBOXYLASE LARGE CHAIN"/>
    <property type="match status" value="1"/>
</dbReference>
<dbReference type="Pfam" id="PF00016">
    <property type="entry name" value="RuBisCO_large"/>
    <property type="match status" value="1"/>
</dbReference>
<dbReference type="Pfam" id="PF02788">
    <property type="entry name" value="RuBisCO_large_N"/>
    <property type="match status" value="1"/>
</dbReference>
<dbReference type="SFLD" id="SFLDG01052">
    <property type="entry name" value="RuBisCO"/>
    <property type="match status" value="1"/>
</dbReference>
<dbReference type="SFLD" id="SFLDS00014">
    <property type="entry name" value="RuBisCO"/>
    <property type="match status" value="1"/>
</dbReference>
<dbReference type="SFLD" id="SFLDG00301">
    <property type="entry name" value="RuBisCO-like_proteins"/>
    <property type="match status" value="1"/>
</dbReference>
<dbReference type="SUPFAM" id="SSF51649">
    <property type="entry name" value="RuBisCo, C-terminal domain"/>
    <property type="match status" value="1"/>
</dbReference>
<dbReference type="SUPFAM" id="SSF54966">
    <property type="entry name" value="RuBisCO, large subunit, small (N-terminal) domain"/>
    <property type="match status" value="1"/>
</dbReference>
<dbReference type="PROSITE" id="PS00157">
    <property type="entry name" value="RUBISCO_LARGE"/>
    <property type="match status" value="1"/>
</dbReference>
<evidence type="ECO:0000255" key="1">
    <source>
        <dbReference type="HAMAP-Rule" id="MF_01338"/>
    </source>
</evidence>
<accession>P25826</accession>
<comment type="function">
    <text evidence="1">RuBisCO catalyzes two reactions: the carboxylation of D-ribulose 1,5-bisphosphate, the primary event in carbon dioxide fixation, as well as the oxidative fragmentation of the pentose substrate in the photorespiration process. Both reactions occur simultaneously and in competition at the same active site.</text>
</comment>
<comment type="catalytic activity">
    <reaction evidence="1">
        <text>2 (2R)-3-phosphoglycerate + 2 H(+) = D-ribulose 1,5-bisphosphate + CO2 + H2O</text>
        <dbReference type="Rhea" id="RHEA:23124"/>
        <dbReference type="ChEBI" id="CHEBI:15377"/>
        <dbReference type="ChEBI" id="CHEBI:15378"/>
        <dbReference type="ChEBI" id="CHEBI:16526"/>
        <dbReference type="ChEBI" id="CHEBI:57870"/>
        <dbReference type="ChEBI" id="CHEBI:58272"/>
        <dbReference type="EC" id="4.1.1.39"/>
    </reaction>
</comment>
<comment type="catalytic activity">
    <reaction evidence="1">
        <text>D-ribulose 1,5-bisphosphate + O2 = 2-phosphoglycolate + (2R)-3-phosphoglycerate + 2 H(+)</text>
        <dbReference type="Rhea" id="RHEA:36631"/>
        <dbReference type="ChEBI" id="CHEBI:15378"/>
        <dbReference type="ChEBI" id="CHEBI:15379"/>
        <dbReference type="ChEBI" id="CHEBI:57870"/>
        <dbReference type="ChEBI" id="CHEBI:58033"/>
        <dbReference type="ChEBI" id="CHEBI:58272"/>
    </reaction>
</comment>
<comment type="cofactor">
    <cofactor evidence="1">
        <name>Mg(2+)</name>
        <dbReference type="ChEBI" id="CHEBI:18420"/>
    </cofactor>
    <text evidence="1">Binds 1 Mg(2+) ion per subunit.</text>
</comment>
<comment type="subunit">
    <text evidence="1">Heterohexadecamer of 8 large chains and 8 small chains; disulfide-linked. The disulfide link is formed within the large subunit homodimers.</text>
</comment>
<comment type="subcellular location">
    <subcellularLocation>
        <location>Plastid</location>
        <location>Chloroplast</location>
    </subcellularLocation>
</comment>
<comment type="PTM">
    <text evidence="1">The disulfide bond which can form in the large chain dimeric partners within the hexadecamer appears to be associated with oxidative stress and protein turnover.</text>
</comment>
<comment type="miscellaneous">
    <text evidence="1">The basic functional RuBisCO is composed of a large chain homodimer in a 'head-to-tail' conformation. In form I RuBisCO this homodimer is arranged in a barrel-like tetramer with the small subunits forming a tetrameric 'cap' on each end of the 'barrel'.</text>
</comment>
<comment type="similarity">
    <text evidence="1">Belongs to the RuBisCO large chain family. Type I subfamily.</text>
</comment>